<evidence type="ECO:0000250" key="1"/>
<evidence type="ECO:0000256" key="2">
    <source>
        <dbReference type="SAM" id="MobiDB-lite"/>
    </source>
</evidence>
<evidence type="ECO:0000269" key="3">
    <source>
    </source>
</evidence>
<evidence type="ECO:0000305" key="4"/>
<sequence>MASPRRSEADLASPARGPGSGPPSPPHPGPDSARPLSRITSAAASPPPPGQRTAEPPTTISIPRTLWRLSIPLYITHPSLPNTPFITSLPRVSYLSLLLPRIRAFLPPSIPAPTSFHHEGIALRALPLGLLVDLYQPTLPWRLTVDQGDDWHVGDTFLNGVKEADFVRNGHAKQIMGMSKADTTALWNAVRDADYPAWARINARLLNPSTPIKHVPLRIYIPSSGGGGAGGATPAGSFRVMQTLVPPRTANRIPQTLGPTLRDLLPVLFPSSRDPVLANVVLHGAPVPFSAPLEGLMREAAYPDGWLCLTVVPL</sequence>
<protein>
    <recommendedName>
        <fullName>Autophagy protein 5</fullName>
    </recommendedName>
</protein>
<dbReference type="EMBL" id="EF486490">
    <property type="protein sequence ID" value="ABO93146.1"/>
    <property type="molecule type" value="mRNA"/>
</dbReference>
<dbReference type="EMBL" id="CM001231">
    <property type="protein sequence ID" value="EHA57283.1"/>
    <property type="molecule type" value="Genomic_DNA"/>
</dbReference>
<dbReference type="RefSeq" id="XP_003709895.1">
    <property type="nucleotide sequence ID" value="XM_003709847.1"/>
</dbReference>
<dbReference type="SMR" id="Q525E4"/>
<dbReference type="STRING" id="242507.Q525E4"/>
<dbReference type="EnsemblFungi" id="MGG_09262T0">
    <property type="protein sequence ID" value="MGG_09262T0"/>
    <property type="gene ID" value="MGG_09262"/>
</dbReference>
<dbReference type="GeneID" id="2680280"/>
<dbReference type="KEGG" id="mgr:MGG_09262"/>
<dbReference type="VEuPathDB" id="FungiDB:MGG_09262"/>
<dbReference type="eggNOG" id="KOG2976">
    <property type="taxonomic scope" value="Eukaryota"/>
</dbReference>
<dbReference type="HOGENOM" id="CLU_051894_2_0_1"/>
<dbReference type="InParanoid" id="Q525E4"/>
<dbReference type="OMA" id="SIQKAVW"/>
<dbReference type="OrthoDB" id="272162at2759"/>
<dbReference type="PHI-base" id="PHI:2073"/>
<dbReference type="PHI-base" id="PHI:2091"/>
<dbReference type="Proteomes" id="UP000009058">
    <property type="component" value="Chromosome 1"/>
</dbReference>
<dbReference type="GO" id="GO:0034274">
    <property type="term" value="C:Atg12-Atg5-Atg16 complex"/>
    <property type="evidence" value="ECO:0007669"/>
    <property type="project" value="TreeGrafter"/>
</dbReference>
<dbReference type="GO" id="GO:0005776">
    <property type="term" value="C:autophagosome"/>
    <property type="evidence" value="ECO:0007669"/>
    <property type="project" value="TreeGrafter"/>
</dbReference>
<dbReference type="GO" id="GO:0044233">
    <property type="term" value="C:mitochondria-associated endoplasmic reticulum membrane contact site"/>
    <property type="evidence" value="ECO:0007669"/>
    <property type="project" value="TreeGrafter"/>
</dbReference>
<dbReference type="GO" id="GO:0061908">
    <property type="term" value="C:phagophore"/>
    <property type="evidence" value="ECO:0007669"/>
    <property type="project" value="TreeGrafter"/>
</dbReference>
<dbReference type="GO" id="GO:0034045">
    <property type="term" value="C:phagophore assembly site membrane"/>
    <property type="evidence" value="ECO:0007669"/>
    <property type="project" value="UniProtKB-SubCell"/>
</dbReference>
<dbReference type="GO" id="GO:0019776">
    <property type="term" value="F:Atg8-family ligase activity"/>
    <property type="evidence" value="ECO:0007669"/>
    <property type="project" value="TreeGrafter"/>
</dbReference>
<dbReference type="GO" id="GO:0000422">
    <property type="term" value="P:autophagy of mitochondrion"/>
    <property type="evidence" value="ECO:0007669"/>
    <property type="project" value="TreeGrafter"/>
</dbReference>
<dbReference type="GO" id="GO:0006995">
    <property type="term" value="P:cellular response to nitrogen starvation"/>
    <property type="evidence" value="ECO:0007669"/>
    <property type="project" value="TreeGrafter"/>
</dbReference>
<dbReference type="GO" id="GO:0034727">
    <property type="term" value="P:piecemeal microautophagy of the nucleus"/>
    <property type="evidence" value="ECO:0007669"/>
    <property type="project" value="TreeGrafter"/>
</dbReference>
<dbReference type="GO" id="GO:0015031">
    <property type="term" value="P:protein transport"/>
    <property type="evidence" value="ECO:0007669"/>
    <property type="project" value="UniProtKB-KW"/>
</dbReference>
<dbReference type="Gene3D" id="3.10.20.620">
    <property type="match status" value="1"/>
</dbReference>
<dbReference type="Gene3D" id="1.10.246.190">
    <property type="entry name" value="Autophagy protein Apg5, helix rich domain"/>
    <property type="match status" value="1"/>
</dbReference>
<dbReference type="Gene3D" id="3.10.20.90">
    <property type="entry name" value="Phosphatidylinositol 3-kinase Catalytic Subunit, Chain A, domain 1"/>
    <property type="match status" value="1"/>
</dbReference>
<dbReference type="InterPro" id="IPR007239">
    <property type="entry name" value="Atg5"/>
</dbReference>
<dbReference type="InterPro" id="IPR048940">
    <property type="entry name" value="ATG5_HBR"/>
</dbReference>
<dbReference type="InterPro" id="IPR042526">
    <property type="entry name" value="Atg5_HR"/>
</dbReference>
<dbReference type="InterPro" id="IPR048939">
    <property type="entry name" value="ATG5_UblA"/>
</dbReference>
<dbReference type="InterPro" id="IPR042527">
    <property type="entry name" value="Atg5_UblA_dom_sf"/>
</dbReference>
<dbReference type="InterPro" id="IPR048318">
    <property type="entry name" value="ATG5_UblB"/>
</dbReference>
<dbReference type="PANTHER" id="PTHR13040">
    <property type="entry name" value="AUTOPHAGY PROTEIN 5"/>
    <property type="match status" value="1"/>
</dbReference>
<dbReference type="PANTHER" id="PTHR13040:SF2">
    <property type="entry name" value="AUTOPHAGY PROTEIN 5"/>
    <property type="match status" value="1"/>
</dbReference>
<dbReference type="Pfam" id="PF20637">
    <property type="entry name" value="ATG5_HBR"/>
    <property type="match status" value="1"/>
</dbReference>
<dbReference type="Pfam" id="PF20638">
    <property type="entry name" value="ATG5_UblA"/>
    <property type="match status" value="1"/>
</dbReference>
<dbReference type="Pfam" id="PF04106">
    <property type="entry name" value="ATG5_UblB"/>
    <property type="match status" value="1"/>
</dbReference>
<organism>
    <name type="scientific">Pyricularia oryzae (strain 70-15 / ATCC MYA-4617 / FGSC 8958)</name>
    <name type="common">Rice blast fungus</name>
    <name type="synonym">Magnaporthe oryzae</name>
    <dbReference type="NCBI Taxonomy" id="242507"/>
    <lineage>
        <taxon>Eukaryota</taxon>
        <taxon>Fungi</taxon>
        <taxon>Dikarya</taxon>
        <taxon>Ascomycota</taxon>
        <taxon>Pezizomycotina</taxon>
        <taxon>Sordariomycetes</taxon>
        <taxon>Sordariomycetidae</taxon>
        <taxon>Magnaporthales</taxon>
        <taxon>Pyriculariaceae</taxon>
        <taxon>Pyricularia</taxon>
    </lineage>
</organism>
<keyword id="KW-0072">Autophagy</keyword>
<keyword id="KW-1017">Isopeptide bond</keyword>
<keyword id="KW-0472">Membrane</keyword>
<keyword id="KW-0653">Protein transport</keyword>
<keyword id="KW-1185">Reference proteome</keyword>
<keyword id="KW-0813">Transport</keyword>
<keyword id="KW-0832">Ubl conjugation</keyword>
<gene>
    <name type="primary">ATG5</name>
    <name type="ORF">MGG_09262</name>
</gene>
<feature type="chain" id="PRO_0000219006" description="Autophagy protein 5">
    <location>
        <begin position="1"/>
        <end position="314"/>
    </location>
</feature>
<feature type="region of interest" description="Disordered" evidence="2">
    <location>
        <begin position="1"/>
        <end position="59"/>
    </location>
</feature>
<feature type="compositionally biased region" description="Pro residues" evidence="2">
    <location>
        <begin position="20"/>
        <end position="29"/>
    </location>
</feature>
<feature type="cross-link" description="Glycyl lysine isopeptide (Lys-Gly) (interchain with G-Cter in ATG12)" evidence="1">
    <location>
        <position position="162"/>
    </location>
</feature>
<feature type="sequence variant" description="In strain: Guyane 11.">
    <original>H</original>
    <variation>R</variation>
    <location>
        <position position="152"/>
    </location>
</feature>
<feature type="sequence variant" description="In strain: Guyane 11.">
    <original>D</original>
    <variation>G</variation>
    <location>
        <position position="263"/>
    </location>
</feature>
<proteinExistence type="evidence at transcript level"/>
<accession>Q525E4</accession>
<accession>A4R0W4</accession>
<accession>A4UTN9</accession>
<accession>G4MQ90</accession>
<name>ATG5_PYRO7</name>
<comment type="function">
    <text evidence="1 3">Involved in cytoplasm to vacuole transport (Cvt) and autophagic vesicle formation. Autophagy is essential for maintenance of amino acid levels and protein synthesis under nitrogen starvation. Required for selective autophagic degradation of the nucleus (nucleophagy). Also required for mitophagy, which eliminates defective or superfluous mitochondria in order to fulfill cellular energy requirements and prevent excess ROS production. Conjugation with ATG12, through a ubiquitin-like conjugating system involving ATG7 as an E1-like activating enzyme and ATG10 as an E2-like conjugating enzyme, is essential for its function. The ATG12-ATG5 conjugate acts as an E3-like enzyme which is required for lipidation of ATG8 and ATG8 association to the vesicle membranes (By similarity). Required for cell differentiation and pathogenesis.</text>
</comment>
<comment type="subunit">
    <text evidence="1">Conjugated with ATG12.</text>
</comment>
<comment type="subcellular location">
    <subcellularLocation>
        <location evidence="1">Preautophagosomal structure membrane</location>
        <topology evidence="1">Peripheral membrane protein</topology>
    </subcellularLocation>
</comment>
<comment type="PTM">
    <text evidence="1">Conjugated to ATG12; which is essential for autophagy.</text>
</comment>
<comment type="similarity">
    <text evidence="4">Belongs to the ATG5 family.</text>
</comment>
<reference key="1">
    <citation type="journal article" date="2009" name="Curr. Genet.">
        <title>An autophagy gene, MgATG5, is required for cell differentiation and pathogenesis in Magnaporthe oryzae.</title>
        <authorList>
            <person name="Lu J.-P."/>
            <person name="Liu X.-H."/>
            <person name="Feng X.-X."/>
            <person name="Min H."/>
            <person name="Lin F.-C."/>
        </authorList>
    </citation>
    <scope>NUCLEOTIDE SEQUENCE [MRNA]</scope>
    <scope>FUNCTION</scope>
    <source>
        <strain>Guyane 11</strain>
    </source>
</reference>
<reference key="2">
    <citation type="journal article" date="2005" name="Nature">
        <title>The genome sequence of the rice blast fungus Magnaporthe grisea.</title>
        <authorList>
            <person name="Dean R.A."/>
            <person name="Talbot N.J."/>
            <person name="Ebbole D.J."/>
            <person name="Farman M.L."/>
            <person name="Mitchell T.K."/>
            <person name="Orbach M.J."/>
            <person name="Thon M.R."/>
            <person name="Kulkarni R."/>
            <person name="Xu J.-R."/>
            <person name="Pan H."/>
            <person name="Read N.D."/>
            <person name="Lee Y.-H."/>
            <person name="Carbone I."/>
            <person name="Brown D."/>
            <person name="Oh Y.Y."/>
            <person name="Donofrio N."/>
            <person name="Jeong J.S."/>
            <person name="Soanes D.M."/>
            <person name="Djonovic S."/>
            <person name="Kolomiets E."/>
            <person name="Rehmeyer C."/>
            <person name="Li W."/>
            <person name="Harding M."/>
            <person name="Kim S."/>
            <person name="Lebrun M.-H."/>
            <person name="Bohnert H."/>
            <person name="Coughlan S."/>
            <person name="Butler J."/>
            <person name="Calvo S.E."/>
            <person name="Ma L.-J."/>
            <person name="Nicol R."/>
            <person name="Purcell S."/>
            <person name="Nusbaum C."/>
            <person name="Galagan J.E."/>
            <person name="Birren B.W."/>
        </authorList>
    </citation>
    <scope>NUCLEOTIDE SEQUENCE [LARGE SCALE GENOMIC DNA]</scope>
    <source>
        <strain>70-15 / ATCC MYA-4617 / FGSC 8958</strain>
    </source>
</reference>